<gene>
    <name type="primary">HBA</name>
</gene>
<organism>
    <name type="scientific">Ateles geoffroyi</name>
    <name type="common">Black-handed spider monkey</name>
    <name type="synonym">Geoffroy's spider monkey</name>
    <dbReference type="NCBI Taxonomy" id="9509"/>
    <lineage>
        <taxon>Eukaryota</taxon>
        <taxon>Metazoa</taxon>
        <taxon>Chordata</taxon>
        <taxon>Craniata</taxon>
        <taxon>Vertebrata</taxon>
        <taxon>Euteleostomi</taxon>
        <taxon>Mammalia</taxon>
        <taxon>Eutheria</taxon>
        <taxon>Euarchontoglires</taxon>
        <taxon>Primates</taxon>
        <taxon>Haplorrhini</taxon>
        <taxon>Platyrrhini</taxon>
        <taxon>Atelidae</taxon>
        <taxon>Atelinae</taxon>
        <taxon>Ateles</taxon>
    </lineage>
</organism>
<sequence length="142" mass="15225">MVLSPADKSNVKAAWGKVGGHAGDYGAEALERMFLSFPTTKTYFPHFDLSHGSAQVKGHGKKVADALTNAVAHVDDMPNALSALSDLHAHKLRVDPVNFKLLSHCLLVTLAAHHPADFTPAVHASLDKFLASVSTVLTSKYR</sequence>
<dbReference type="PIR" id="A02253">
    <property type="entry name" value="HAMKP"/>
</dbReference>
<dbReference type="SMR" id="P67817"/>
<dbReference type="GO" id="GO:0072562">
    <property type="term" value="C:blood microparticle"/>
    <property type="evidence" value="ECO:0007669"/>
    <property type="project" value="TreeGrafter"/>
</dbReference>
<dbReference type="GO" id="GO:0031838">
    <property type="term" value="C:haptoglobin-hemoglobin complex"/>
    <property type="evidence" value="ECO:0007669"/>
    <property type="project" value="TreeGrafter"/>
</dbReference>
<dbReference type="GO" id="GO:0005833">
    <property type="term" value="C:hemoglobin complex"/>
    <property type="evidence" value="ECO:0007669"/>
    <property type="project" value="InterPro"/>
</dbReference>
<dbReference type="GO" id="GO:0031720">
    <property type="term" value="F:haptoglobin binding"/>
    <property type="evidence" value="ECO:0007669"/>
    <property type="project" value="TreeGrafter"/>
</dbReference>
<dbReference type="GO" id="GO:0020037">
    <property type="term" value="F:heme binding"/>
    <property type="evidence" value="ECO:0007669"/>
    <property type="project" value="InterPro"/>
</dbReference>
<dbReference type="GO" id="GO:0005506">
    <property type="term" value="F:iron ion binding"/>
    <property type="evidence" value="ECO:0007669"/>
    <property type="project" value="InterPro"/>
</dbReference>
<dbReference type="GO" id="GO:0043177">
    <property type="term" value="F:organic acid binding"/>
    <property type="evidence" value="ECO:0007669"/>
    <property type="project" value="TreeGrafter"/>
</dbReference>
<dbReference type="GO" id="GO:0019825">
    <property type="term" value="F:oxygen binding"/>
    <property type="evidence" value="ECO:0007669"/>
    <property type="project" value="InterPro"/>
</dbReference>
<dbReference type="GO" id="GO:0005344">
    <property type="term" value="F:oxygen carrier activity"/>
    <property type="evidence" value="ECO:0007669"/>
    <property type="project" value="UniProtKB-KW"/>
</dbReference>
<dbReference type="GO" id="GO:0004601">
    <property type="term" value="F:peroxidase activity"/>
    <property type="evidence" value="ECO:0007669"/>
    <property type="project" value="TreeGrafter"/>
</dbReference>
<dbReference type="GO" id="GO:0042744">
    <property type="term" value="P:hydrogen peroxide catabolic process"/>
    <property type="evidence" value="ECO:0007669"/>
    <property type="project" value="TreeGrafter"/>
</dbReference>
<dbReference type="CDD" id="cd08927">
    <property type="entry name" value="Hb-alpha-like"/>
    <property type="match status" value="1"/>
</dbReference>
<dbReference type="FunFam" id="1.10.490.10:FF:000002">
    <property type="entry name" value="Hemoglobin subunit alpha"/>
    <property type="match status" value="1"/>
</dbReference>
<dbReference type="Gene3D" id="1.10.490.10">
    <property type="entry name" value="Globins"/>
    <property type="match status" value="1"/>
</dbReference>
<dbReference type="InterPro" id="IPR000971">
    <property type="entry name" value="Globin"/>
</dbReference>
<dbReference type="InterPro" id="IPR009050">
    <property type="entry name" value="Globin-like_sf"/>
</dbReference>
<dbReference type="InterPro" id="IPR012292">
    <property type="entry name" value="Globin/Proto"/>
</dbReference>
<dbReference type="InterPro" id="IPR002338">
    <property type="entry name" value="Hemoglobin_a-typ"/>
</dbReference>
<dbReference type="InterPro" id="IPR050056">
    <property type="entry name" value="Hemoglobin_oxygen_transport"/>
</dbReference>
<dbReference type="InterPro" id="IPR002339">
    <property type="entry name" value="Hemoglobin_pi"/>
</dbReference>
<dbReference type="PANTHER" id="PTHR11442">
    <property type="entry name" value="HEMOGLOBIN FAMILY MEMBER"/>
    <property type="match status" value="1"/>
</dbReference>
<dbReference type="PANTHER" id="PTHR11442:SF48">
    <property type="entry name" value="HEMOGLOBIN SUBUNIT ALPHA"/>
    <property type="match status" value="1"/>
</dbReference>
<dbReference type="Pfam" id="PF00042">
    <property type="entry name" value="Globin"/>
    <property type="match status" value="1"/>
</dbReference>
<dbReference type="PRINTS" id="PR00612">
    <property type="entry name" value="ALPHAHAEM"/>
</dbReference>
<dbReference type="PRINTS" id="PR00815">
    <property type="entry name" value="PIHAEM"/>
</dbReference>
<dbReference type="SUPFAM" id="SSF46458">
    <property type="entry name" value="Globin-like"/>
    <property type="match status" value="1"/>
</dbReference>
<dbReference type="PROSITE" id="PS01033">
    <property type="entry name" value="GLOBIN"/>
    <property type="match status" value="1"/>
</dbReference>
<protein>
    <recommendedName>
        <fullName>Hemoglobin subunit alpha</fullName>
    </recommendedName>
    <alternativeName>
        <fullName>Alpha-globin</fullName>
    </alternativeName>
    <alternativeName>
        <fullName>Hemoglobin alpha chain</fullName>
    </alternativeName>
    <component>
        <recommendedName>
            <fullName evidence="2">Hemopressin</fullName>
        </recommendedName>
    </component>
</protein>
<keyword id="KW-0007">Acetylation</keyword>
<keyword id="KW-0903">Direct protein sequencing</keyword>
<keyword id="KW-0349">Heme</keyword>
<keyword id="KW-0408">Iron</keyword>
<keyword id="KW-0479">Metal-binding</keyword>
<keyword id="KW-0561">Oxygen transport</keyword>
<keyword id="KW-0597">Phosphoprotein</keyword>
<keyword id="KW-0813">Transport</keyword>
<reference key="1">
    <citation type="journal article" date="1973" name="Hoppe-Seyler's Z. Physiol. Chem.">
        <title>Studies on the primary structures of alpha and beta polypeptide chains of adult hemoglobin of the spider monkey (Ateles geoffroyi).</title>
        <authorList>
            <person name="Matsuda G."/>
            <person name="Maita T."/>
            <person name="Suzuyama Y."/>
            <person name="Setoguchi M."/>
            <person name="Ota Y."/>
            <person name="Araya A."/>
            <person name="Goodman M."/>
            <person name="Barnabas J."/>
            <person name="Prychodko W."/>
        </authorList>
    </citation>
    <scope>PROTEIN SEQUENCE OF 2-142</scope>
</reference>
<name>HBA_ATEGE</name>
<proteinExistence type="evidence at protein level"/>
<evidence type="ECO:0000250" key="1">
    <source>
        <dbReference type="UniProtKB" id="P01942"/>
    </source>
</evidence>
<evidence type="ECO:0000250" key="2">
    <source>
        <dbReference type="UniProtKB" id="P01946"/>
    </source>
</evidence>
<evidence type="ECO:0000250" key="3">
    <source>
        <dbReference type="UniProtKB" id="P18969"/>
    </source>
</evidence>
<evidence type="ECO:0000250" key="4">
    <source>
        <dbReference type="UniProtKB" id="P69905"/>
    </source>
</evidence>
<evidence type="ECO:0000255" key="5">
    <source>
        <dbReference type="PROSITE-ProRule" id="PRU00238"/>
    </source>
</evidence>
<comment type="function">
    <text>Involved in oxygen transport from the lung to the various peripheral tissues.</text>
</comment>
<comment type="function">
    <molecule>Hemopressin</molecule>
    <text evidence="2">Hemopressin acts as an antagonist peptide of the cannabinoid receptor CNR1. Hemopressin-binding efficiently blocks cannabinoid receptor CNR1 and subsequent signaling.</text>
</comment>
<comment type="subunit">
    <text>Heterotetramer of two alpha chains and two beta chains.</text>
</comment>
<comment type="tissue specificity">
    <text>Red blood cells.</text>
</comment>
<comment type="similarity">
    <text evidence="5">Belongs to the globin family.</text>
</comment>
<feature type="initiator methionine" description="Removed" evidence="3">
    <location>
        <position position="1"/>
    </location>
</feature>
<feature type="chain" id="PRO_0000052561" description="Hemoglobin subunit alpha">
    <location>
        <begin position="2"/>
        <end position="142"/>
    </location>
</feature>
<feature type="peptide" id="PRO_0000455839" description="Hemopressin" evidence="2">
    <location>
        <begin position="96"/>
        <end position="104"/>
    </location>
</feature>
<feature type="domain" description="Globin" evidence="5">
    <location>
        <begin position="2"/>
        <end position="142"/>
    </location>
</feature>
<feature type="binding site" evidence="5">
    <location>
        <position position="59"/>
    </location>
    <ligand>
        <name>O2</name>
        <dbReference type="ChEBI" id="CHEBI:15379"/>
    </ligand>
</feature>
<feature type="binding site" description="proximal binding residue" evidence="5">
    <location>
        <position position="88"/>
    </location>
    <ligand>
        <name>heme b</name>
        <dbReference type="ChEBI" id="CHEBI:60344"/>
    </ligand>
    <ligandPart>
        <name>Fe</name>
        <dbReference type="ChEBI" id="CHEBI:18248"/>
    </ligandPart>
</feature>
<feature type="modified residue" description="Phosphoserine" evidence="4">
    <location>
        <position position="4"/>
    </location>
</feature>
<feature type="modified residue" description="N6-succinyllysine" evidence="1">
    <location>
        <position position="8"/>
    </location>
</feature>
<feature type="modified residue" description="N6-succinyllysine" evidence="1">
    <location>
        <position position="12"/>
    </location>
</feature>
<feature type="modified residue" description="N6-acetyllysine; alternate" evidence="4">
    <location>
        <position position="17"/>
    </location>
</feature>
<feature type="modified residue" description="N6-succinyllysine; alternate" evidence="1">
    <location>
        <position position="17"/>
    </location>
</feature>
<feature type="modified residue" description="Phosphotyrosine" evidence="4">
    <location>
        <position position="25"/>
    </location>
</feature>
<feature type="modified residue" description="Phosphoserine" evidence="4">
    <location>
        <position position="36"/>
    </location>
</feature>
<feature type="modified residue" description="N6-succinyllysine" evidence="1">
    <location>
        <position position="41"/>
    </location>
</feature>
<feature type="modified residue" description="Phosphoserine" evidence="4">
    <location>
        <position position="50"/>
    </location>
</feature>
<feature type="modified residue" description="Phosphoserine" evidence="1">
    <location>
        <position position="103"/>
    </location>
</feature>
<feature type="modified residue" description="Phosphothreonine" evidence="1">
    <location>
        <position position="109"/>
    </location>
</feature>
<feature type="modified residue" description="Phosphoserine" evidence="1">
    <location>
        <position position="125"/>
    </location>
</feature>
<feature type="modified residue" description="Phosphoserine" evidence="1">
    <location>
        <position position="132"/>
    </location>
</feature>
<feature type="modified residue" description="Phosphothreonine" evidence="1">
    <location>
        <position position="135"/>
    </location>
</feature>
<feature type="modified residue" description="Phosphothreonine" evidence="1">
    <location>
        <position position="138"/>
    </location>
</feature>
<feature type="modified residue" description="Phosphoserine" evidence="1">
    <location>
        <position position="139"/>
    </location>
</feature>
<accession>P67817</accession>
<accession>P01927</accession>